<sequence>MKIALLQHTPDPEAAVALAARLCYASVGIDELREKLSASDVTAFLDKIMSLGHQSVLEHASFTFGIEGISRAASHQLVRHRIASYSQQSQRYVTFRGDGFPRVVPGSVSATEKRRQVFESAMQACADAYRALVDDGVPAEDARFVLPNAAETKIIVTMNARELIHFFGLRCCERAQWEIRALAVEMLRLVKGVAPTIFRDAGPGCLTGPCPEGGMTCGKAAEVKRLFREMSI</sequence>
<keyword id="KW-0274">FAD</keyword>
<keyword id="KW-0285">Flavoprotein</keyword>
<keyword id="KW-0489">Methyltransferase</keyword>
<keyword id="KW-0521">NADP</keyword>
<keyword id="KW-0545">Nucleotide biosynthesis</keyword>
<keyword id="KW-1185">Reference proteome</keyword>
<keyword id="KW-0808">Transferase</keyword>
<reference key="1">
    <citation type="journal article" date="2003" name="Science">
        <title>Genome of Geobacter sulfurreducens: metal reduction in subsurface environments.</title>
        <authorList>
            <person name="Methe B.A."/>
            <person name="Nelson K.E."/>
            <person name="Eisen J.A."/>
            <person name="Paulsen I.T."/>
            <person name="Nelson W.C."/>
            <person name="Heidelberg J.F."/>
            <person name="Wu D."/>
            <person name="Wu M."/>
            <person name="Ward N.L."/>
            <person name="Beanan M.J."/>
            <person name="Dodson R.J."/>
            <person name="Madupu R."/>
            <person name="Brinkac L.M."/>
            <person name="Daugherty S.C."/>
            <person name="DeBoy R.T."/>
            <person name="Durkin A.S."/>
            <person name="Gwinn M.L."/>
            <person name="Kolonay J.F."/>
            <person name="Sullivan S.A."/>
            <person name="Haft D.H."/>
            <person name="Selengut J."/>
            <person name="Davidsen T.M."/>
            <person name="Zafar N."/>
            <person name="White O."/>
            <person name="Tran B."/>
            <person name="Romero C."/>
            <person name="Forberger H.A."/>
            <person name="Weidman J.F."/>
            <person name="Khouri H.M."/>
            <person name="Feldblyum T.V."/>
            <person name="Utterback T.R."/>
            <person name="Van Aken S.E."/>
            <person name="Lovley D.R."/>
            <person name="Fraser C.M."/>
        </authorList>
    </citation>
    <scope>NUCLEOTIDE SEQUENCE [LARGE SCALE GENOMIC DNA]</scope>
    <source>
        <strain>ATCC 51573 / DSM 12127 / PCA</strain>
    </source>
</reference>
<dbReference type="EC" id="2.1.1.148" evidence="1"/>
<dbReference type="EMBL" id="AE017180">
    <property type="protein sequence ID" value="AAR36497.1"/>
    <property type="molecule type" value="Genomic_DNA"/>
</dbReference>
<dbReference type="RefSeq" id="NP_954147.1">
    <property type="nucleotide sequence ID" value="NC_002939.5"/>
</dbReference>
<dbReference type="RefSeq" id="WP_010943727.1">
    <property type="nucleotide sequence ID" value="NC_002939.5"/>
</dbReference>
<dbReference type="SMR" id="Q748A9"/>
<dbReference type="STRING" id="243231.GSU3106"/>
<dbReference type="EnsemblBacteria" id="AAR36497">
    <property type="protein sequence ID" value="AAR36497"/>
    <property type="gene ID" value="GSU3106"/>
</dbReference>
<dbReference type="KEGG" id="gsu:GSU3106"/>
<dbReference type="PATRIC" id="fig|243231.5.peg.3130"/>
<dbReference type="eggNOG" id="COG1351">
    <property type="taxonomic scope" value="Bacteria"/>
</dbReference>
<dbReference type="HOGENOM" id="CLU_077585_0_0_7"/>
<dbReference type="InParanoid" id="Q748A9"/>
<dbReference type="OrthoDB" id="9780625at2"/>
<dbReference type="UniPathway" id="UPA00575"/>
<dbReference type="Proteomes" id="UP000000577">
    <property type="component" value="Chromosome"/>
</dbReference>
<dbReference type="GO" id="GO:0050660">
    <property type="term" value="F:flavin adenine dinucleotide binding"/>
    <property type="evidence" value="ECO:0000318"/>
    <property type="project" value="GO_Central"/>
</dbReference>
<dbReference type="GO" id="GO:0070402">
    <property type="term" value="F:NADPH binding"/>
    <property type="evidence" value="ECO:0000318"/>
    <property type="project" value="GO_Central"/>
</dbReference>
<dbReference type="GO" id="GO:0050797">
    <property type="term" value="F:thymidylate synthase (FAD) activity"/>
    <property type="evidence" value="ECO:0000318"/>
    <property type="project" value="GO_Central"/>
</dbReference>
<dbReference type="GO" id="GO:0004799">
    <property type="term" value="F:thymidylate synthase activity"/>
    <property type="evidence" value="ECO:0000318"/>
    <property type="project" value="GO_Central"/>
</dbReference>
<dbReference type="GO" id="GO:0006231">
    <property type="term" value="P:dTMP biosynthetic process"/>
    <property type="evidence" value="ECO:0000318"/>
    <property type="project" value="GO_Central"/>
</dbReference>
<dbReference type="GO" id="GO:0006235">
    <property type="term" value="P:dTTP biosynthetic process"/>
    <property type="evidence" value="ECO:0007669"/>
    <property type="project" value="UniProtKB-UniRule"/>
</dbReference>
<dbReference type="GO" id="GO:0032259">
    <property type="term" value="P:methylation"/>
    <property type="evidence" value="ECO:0007669"/>
    <property type="project" value="UniProtKB-KW"/>
</dbReference>
<dbReference type="CDD" id="cd20175">
    <property type="entry name" value="ThyX"/>
    <property type="match status" value="1"/>
</dbReference>
<dbReference type="FunFam" id="3.30.1360.170:FF:000004">
    <property type="entry name" value="Flavin-dependent thymidylate synthase"/>
    <property type="match status" value="1"/>
</dbReference>
<dbReference type="Gene3D" id="3.30.1360.170">
    <property type="match status" value="1"/>
</dbReference>
<dbReference type="HAMAP" id="MF_01408">
    <property type="entry name" value="ThyX"/>
    <property type="match status" value="1"/>
</dbReference>
<dbReference type="InterPro" id="IPR003669">
    <property type="entry name" value="Thymidylate_synthase_ThyX"/>
</dbReference>
<dbReference type="InterPro" id="IPR036098">
    <property type="entry name" value="Thymidylate_synthase_ThyX_sf"/>
</dbReference>
<dbReference type="NCBIfam" id="TIGR02170">
    <property type="entry name" value="thyX"/>
    <property type="match status" value="1"/>
</dbReference>
<dbReference type="PANTHER" id="PTHR34934">
    <property type="entry name" value="FLAVIN-DEPENDENT THYMIDYLATE SYNTHASE"/>
    <property type="match status" value="1"/>
</dbReference>
<dbReference type="PANTHER" id="PTHR34934:SF1">
    <property type="entry name" value="FLAVIN-DEPENDENT THYMIDYLATE SYNTHASE"/>
    <property type="match status" value="1"/>
</dbReference>
<dbReference type="Pfam" id="PF02511">
    <property type="entry name" value="Thy1"/>
    <property type="match status" value="1"/>
</dbReference>
<dbReference type="SUPFAM" id="SSF69796">
    <property type="entry name" value="Thymidylate synthase-complementing protein Thy1"/>
    <property type="match status" value="1"/>
</dbReference>
<dbReference type="PROSITE" id="PS51331">
    <property type="entry name" value="THYX"/>
    <property type="match status" value="1"/>
</dbReference>
<feature type="chain" id="PRO_0000175564" description="Flavin-dependent thymidylate synthase">
    <location>
        <begin position="1"/>
        <end position="232"/>
    </location>
</feature>
<feature type="domain" description="ThyX" evidence="2">
    <location>
        <begin position="1"/>
        <end position="204"/>
    </location>
</feature>
<feature type="short sequence motif" description="ThyX motif" evidence="1">
    <location>
        <begin position="79"/>
        <end position="89"/>
    </location>
</feature>
<feature type="active site" description="Involved in ionization of N3 of dUMP, leading to its activation" evidence="1">
    <location>
        <position position="170"/>
    </location>
</feature>
<feature type="binding site" evidence="1">
    <location>
        <position position="55"/>
    </location>
    <ligand>
        <name>FAD</name>
        <dbReference type="ChEBI" id="CHEBI:57692"/>
        <note>ligand shared between neighboring subunits</note>
    </ligand>
</feature>
<feature type="binding site" evidence="1">
    <location>
        <begin position="76"/>
        <end position="79"/>
    </location>
    <ligand>
        <name>dUMP</name>
        <dbReference type="ChEBI" id="CHEBI:246422"/>
        <note>ligand shared between dimeric partners</note>
    </ligand>
</feature>
<feature type="binding site" evidence="1">
    <location>
        <begin position="79"/>
        <end position="81"/>
    </location>
    <ligand>
        <name>FAD</name>
        <dbReference type="ChEBI" id="CHEBI:57692"/>
        <note>ligand shared between neighboring subunits</note>
    </ligand>
</feature>
<feature type="binding site" description="in other chain" evidence="1">
    <location>
        <begin position="87"/>
        <end position="91"/>
    </location>
    <ligand>
        <name>dUMP</name>
        <dbReference type="ChEBI" id="CHEBI:246422"/>
        <note>ligand shared between dimeric partners</note>
    </ligand>
</feature>
<feature type="binding site" evidence="1">
    <location>
        <position position="87"/>
    </location>
    <ligand>
        <name>FAD</name>
        <dbReference type="ChEBI" id="CHEBI:57692"/>
        <note>ligand shared between neighboring subunits</note>
    </ligand>
</feature>
<feature type="binding site" description="in other chain" evidence="1">
    <location>
        <position position="143"/>
    </location>
    <ligand>
        <name>dUMP</name>
        <dbReference type="ChEBI" id="CHEBI:246422"/>
        <note>ligand shared between dimeric partners</note>
    </ligand>
</feature>
<feature type="binding site" evidence="1">
    <location>
        <begin position="159"/>
        <end position="161"/>
    </location>
    <ligand>
        <name>FAD</name>
        <dbReference type="ChEBI" id="CHEBI:57692"/>
        <note>ligand shared between neighboring subunits</note>
    </ligand>
</feature>
<feature type="binding site" evidence="1">
    <location>
        <position position="165"/>
    </location>
    <ligand>
        <name>FAD</name>
        <dbReference type="ChEBI" id="CHEBI:57692"/>
        <note>ligand shared between neighboring subunits</note>
    </ligand>
</feature>
<feature type="binding site" evidence="1">
    <location>
        <position position="170"/>
    </location>
    <ligand>
        <name>dUMP</name>
        <dbReference type="ChEBI" id="CHEBI:246422"/>
        <note>ligand shared between dimeric partners</note>
    </ligand>
</feature>
<accession>Q748A9</accession>
<protein>
    <recommendedName>
        <fullName evidence="1">Flavin-dependent thymidylate synthase</fullName>
        <shortName evidence="1">FDTS</shortName>
        <ecNumber evidence="1">2.1.1.148</ecNumber>
    </recommendedName>
    <alternativeName>
        <fullName evidence="1">FAD-dependent thymidylate synthase</fullName>
    </alternativeName>
    <alternativeName>
        <fullName evidence="1">Thymidylate synthase ThyX</fullName>
        <shortName evidence="1">TS</shortName>
        <shortName evidence="1">TSase</shortName>
    </alternativeName>
</protein>
<proteinExistence type="inferred from homology"/>
<name>THYX_GEOSL</name>
<evidence type="ECO:0000255" key="1">
    <source>
        <dbReference type="HAMAP-Rule" id="MF_01408"/>
    </source>
</evidence>
<evidence type="ECO:0000255" key="2">
    <source>
        <dbReference type="PROSITE-ProRule" id="PRU00661"/>
    </source>
</evidence>
<comment type="function">
    <text evidence="1">Catalyzes the reductive methylation of 2'-deoxyuridine-5'-monophosphate (dUMP) to 2'-deoxythymidine-5'-monophosphate (dTMP) while utilizing 5,10-methylenetetrahydrofolate (mTHF) as the methyl donor, and NADPH and FADH(2) as the reductant.</text>
</comment>
<comment type="catalytic activity">
    <reaction evidence="1">
        <text>dUMP + (6R)-5,10-methylene-5,6,7,8-tetrahydrofolate + NADPH + H(+) = dTMP + (6S)-5,6,7,8-tetrahydrofolate + NADP(+)</text>
        <dbReference type="Rhea" id="RHEA:29043"/>
        <dbReference type="ChEBI" id="CHEBI:15378"/>
        <dbReference type="ChEBI" id="CHEBI:15636"/>
        <dbReference type="ChEBI" id="CHEBI:57453"/>
        <dbReference type="ChEBI" id="CHEBI:57783"/>
        <dbReference type="ChEBI" id="CHEBI:58349"/>
        <dbReference type="ChEBI" id="CHEBI:63528"/>
        <dbReference type="ChEBI" id="CHEBI:246422"/>
        <dbReference type="EC" id="2.1.1.148"/>
    </reaction>
</comment>
<comment type="cofactor">
    <cofactor evidence="1">
        <name>FAD</name>
        <dbReference type="ChEBI" id="CHEBI:57692"/>
    </cofactor>
    <text evidence="1">Binds 4 FAD per tetramer. Each FAD binding site is formed by three monomers.</text>
</comment>
<comment type="pathway">
    <text evidence="1">Pyrimidine metabolism; dTTP biosynthesis.</text>
</comment>
<comment type="subunit">
    <text evidence="1">Homotetramer.</text>
</comment>
<comment type="similarity">
    <text evidence="1">Belongs to the thymidylate synthase ThyX family.</text>
</comment>
<organism>
    <name type="scientific">Geobacter sulfurreducens (strain ATCC 51573 / DSM 12127 / PCA)</name>
    <dbReference type="NCBI Taxonomy" id="243231"/>
    <lineage>
        <taxon>Bacteria</taxon>
        <taxon>Pseudomonadati</taxon>
        <taxon>Thermodesulfobacteriota</taxon>
        <taxon>Desulfuromonadia</taxon>
        <taxon>Geobacterales</taxon>
        <taxon>Geobacteraceae</taxon>
        <taxon>Geobacter</taxon>
    </lineage>
</organism>
<gene>
    <name evidence="1" type="primary">thyX</name>
    <name type="ordered locus">GSU3106</name>
</gene>